<evidence type="ECO:0000255" key="1">
    <source>
        <dbReference type="HAMAP-Rule" id="MF_00406"/>
    </source>
</evidence>
<comment type="function">
    <text evidence="1">Involved in unsaturated fatty acids biosynthesis. Catalyzes the dehydration of short chain beta-hydroxyacyl-ACPs and long chain saturated and unsaturated beta-hydroxyacyl-ACPs.</text>
</comment>
<comment type="catalytic activity">
    <reaction evidence="1">
        <text>a (3R)-hydroxyacyl-[ACP] = a (2E)-enoyl-[ACP] + H2O</text>
        <dbReference type="Rhea" id="RHEA:13097"/>
        <dbReference type="Rhea" id="RHEA-COMP:9925"/>
        <dbReference type="Rhea" id="RHEA-COMP:9945"/>
        <dbReference type="ChEBI" id="CHEBI:15377"/>
        <dbReference type="ChEBI" id="CHEBI:78784"/>
        <dbReference type="ChEBI" id="CHEBI:78827"/>
        <dbReference type="EC" id="4.2.1.59"/>
    </reaction>
</comment>
<comment type="subunit">
    <text evidence="1">Oligomer.</text>
</comment>
<comment type="subcellular location">
    <subcellularLocation>
        <location evidence="1">Cytoplasm</location>
    </subcellularLocation>
</comment>
<comment type="PTM">
    <text evidence="1">The N-terminus is blocked.</text>
</comment>
<comment type="similarity">
    <text evidence="1">Belongs to the thioester dehydratase family. FabZ subfamily.</text>
</comment>
<gene>
    <name evidence="1" type="primary">fabZ</name>
    <name type="ordered locus">ECH74115_0190</name>
</gene>
<accession>B5Z0F9</accession>
<protein>
    <recommendedName>
        <fullName evidence="1">3-hydroxyacyl-[acyl-carrier-protein] dehydratase FabZ</fullName>
        <ecNumber evidence="1">4.2.1.59</ecNumber>
    </recommendedName>
    <alternativeName>
        <fullName evidence="1">(3R)-hydroxymyristoyl-[acyl-carrier-protein] dehydratase</fullName>
        <shortName evidence="1">(3R)-hydroxymyristoyl-ACP dehydrase</shortName>
    </alternativeName>
    <alternativeName>
        <fullName evidence="1">Beta-hydroxyacyl-ACP dehydratase</fullName>
    </alternativeName>
</protein>
<sequence>MTTNTHTLQIEEILELLPHRFPFLLVDRVLDFEEGRFLRAVKNVSVNEPFFQGHFPGKPIFPGVLILEAMAQATGILAFKSVGKLEPGELYYFAGIDEARFKRPVVPGDQMIMEVTFEKTRRGLTRFKGVALVDGKVVCEATMMCARSREA</sequence>
<organism>
    <name type="scientific">Escherichia coli O157:H7 (strain EC4115 / EHEC)</name>
    <dbReference type="NCBI Taxonomy" id="444450"/>
    <lineage>
        <taxon>Bacteria</taxon>
        <taxon>Pseudomonadati</taxon>
        <taxon>Pseudomonadota</taxon>
        <taxon>Gammaproteobacteria</taxon>
        <taxon>Enterobacterales</taxon>
        <taxon>Enterobacteriaceae</taxon>
        <taxon>Escherichia</taxon>
    </lineage>
</organism>
<keyword id="KW-0963">Cytoplasm</keyword>
<keyword id="KW-0441">Lipid A biosynthesis</keyword>
<keyword id="KW-0444">Lipid biosynthesis</keyword>
<keyword id="KW-0443">Lipid metabolism</keyword>
<keyword id="KW-0456">Lyase</keyword>
<proteinExistence type="inferred from homology"/>
<name>FABZ_ECO5E</name>
<dbReference type="EC" id="4.2.1.59" evidence="1"/>
<dbReference type="EMBL" id="CP001164">
    <property type="protein sequence ID" value="ACI34960.1"/>
    <property type="molecule type" value="Genomic_DNA"/>
</dbReference>
<dbReference type="RefSeq" id="WP_000210739.1">
    <property type="nucleotide sequence ID" value="NC_011353.1"/>
</dbReference>
<dbReference type="SMR" id="B5Z0F9"/>
<dbReference type="GeneID" id="93777245"/>
<dbReference type="KEGG" id="ecf:ECH74115_0190"/>
<dbReference type="HOGENOM" id="CLU_078912_1_0_6"/>
<dbReference type="GO" id="GO:0005737">
    <property type="term" value="C:cytoplasm"/>
    <property type="evidence" value="ECO:0007669"/>
    <property type="project" value="UniProtKB-SubCell"/>
</dbReference>
<dbReference type="GO" id="GO:0016020">
    <property type="term" value="C:membrane"/>
    <property type="evidence" value="ECO:0007669"/>
    <property type="project" value="GOC"/>
</dbReference>
<dbReference type="GO" id="GO:0019171">
    <property type="term" value="F:(3R)-hydroxyacyl-[acyl-carrier-protein] dehydratase activity"/>
    <property type="evidence" value="ECO:0007669"/>
    <property type="project" value="UniProtKB-EC"/>
</dbReference>
<dbReference type="GO" id="GO:0006633">
    <property type="term" value="P:fatty acid biosynthetic process"/>
    <property type="evidence" value="ECO:0007669"/>
    <property type="project" value="UniProtKB-UniRule"/>
</dbReference>
<dbReference type="GO" id="GO:0009245">
    <property type="term" value="P:lipid A biosynthetic process"/>
    <property type="evidence" value="ECO:0007669"/>
    <property type="project" value="UniProtKB-UniRule"/>
</dbReference>
<dbReference type="CDD" id="cd01288">
    <property type="entry name" value="FabZ"/>
    <property type="match status" value="1"/>
</dbReference>
<dbReference type="FunFam" id="3.10.129.10:FF:000001">
    <property type="entry name" value="3-hydroxyacyl-[acyl-carrier-protein] dehydratase FabZ"/>
    <property type="match status" value="1"/>
</dbReference>
<dbReference type="Gene3D" id="3.10.129.10">
    <property type="entry name" value="Hotdog Thioesterase"/>
    <property type="match status" value="1"/>
</dbReference>
<dbReference type="HAMAP" id="MF_00406">
    <property type="entry name" value="FabZ"/>
    <property type="match status" value="1"/>
</dbReference>
<dbReference type="InterPro" id="IPR013114">
    <property type="entry name" value="FabA_FabZ"/>
</dbReference>
<dbReference type="InterPro" id="IPR010084">
    <property type="entry name" value="FabZ"/>
</dbReference>
<dbReference type="InterPro" id="IPR029069">
    <property type="entry name" value="HotDog_dom_sf"/>
</dbReference>
<dbReference type="NCBIfam" id="TIGR01750">
    <property type="entry name" value="fabZ"/>
    <property type="match status" value="1"/>
</dbReference>
<dbReference type="NCBIfam" id="NF000582">
    <property type="entry name" value="PRK00006.1"/>
    <property type="match status" value="1"/>
</dbReference>
<dbReference type="PANTHER" id="PTHR30272">
    <property type="entry name" value="3-HYDROXYACYL-[ACYL-CARRIER-PROTEIN] DEHYDRATASE"/>
    <property type="match status" value="1"/>
</dbReference>
<dbReference type="PANTHER" id="PTHR30272:SF1">
    <property type="entry name" value="3-HYDROXYACYL-[ACYL-CARRIER-PROTEIN] DEHYDRATASE"/>
    <property type="match status" value="1"/>
</dbReference>
<dbReference type="Pfam" id="PF07977">
    <property type="entry name" value="FabA"/>
    <property type="match status" value="1"/>
</dbReference>
<dbReference type="SUPFAM" id="SSF54637">
    <property type="entry name" value="Thioesterase/thiol ester dehydrase-isomerase"/>
    <property type="match status" value="1"/>
</dbReference>
<feature type="chain" id="PRO_1000197299" description="3-hydroxyacyl-[acyl-carrier-protein] dehydratase FabZ">
    <location>
        <begin position="1"/>
        <end position="151"/>
    </location>
</feature>
<feature type="active site" evidence="1">
    <location>
        <position position="54"/>
    </location>
</feature>
<reference key="1">
    <citation type="journal article" date="2011" name="Proc. Natl. Acad. Sci. U.S.A.">
        <title>Genomic anatomy of Escherichia coli O157:H7 outbreaks.</title>
        <authorList>
            <person name="Eppinger M."/>
            <person name="Mammel M.K."/>
            <person name="Leclerc J.E."/>
            <person name="Ravel J."/>
            <person name="Cebula T.A."/>
        </authorList>
    </citation>
    <scope>NUCLEOTIDE SEQUENCE [LARGE SCALE GENOMIC DNA]</scope>
    <source>
        <strain>EC4115 / EHEC</strain>
    </source>
</reference>